<evidence type="ECO:0000255" key="1">
    <source>
        <dbReference type="HAMAP-Rule" id="MF_01328"/>
    </source>
</evidence>
<evidence type="ECO:0000256" key="2">
    <source>
        <dbReference type="SAM" id="MobiDB-lite"/>
    </source>
</evidence>
<evidence type="ECO:0000305" key="3"/>
<gene>
    <name evidence="1" type="primary">rplD</name>
    <name type="ordered locus">Cpar_0178</name>
</gene>
<keyword id="KW-0687">Ribonucleoprotein</keyword>
<keyword id="KW-0689">Ribosomal protein</keyword>
<keyword id="KW-0694">RNA-binding</keyword>
<keyword id="KW-0699">rRNA-binding</keyword>
<proteinExistence type="inferred from homology"/>
<protein>
    <recommendedName>
        <fullName evidence="1">Large ribosomal subunit protein uL4</fullName>
    </recommendedName>
    <alternativeName>
        <fullName evidence="3">50S ribosomal protein L4</fullName>
    </alternativeName>
</protein>
<name>RL4_CHLP8</name>
<accession>B3QR77</accession>
<organism>
    <name type="scientific">Chlorobaculum parvum (strain DSM 263 / NCIMB 8327)</name>
    <name type="common">Chlorobium vibrioforme subsp. thiosulfatophilum</name>
    <dbReference type="NCBI Taxonomy" id="517417"/>
    <lineage>
        <taxon>Bacteria</taxon>
        <taxon>Pseudomonadati</taxon>
        <taxon>Chlorobiota</taxon>
        <taxon>Chlorobiia</taxon>
        <taxon>Chlorobiales</taxon>
        <taxon>Chlorobiaceae</taxon>
        <taxon>Chlorobaculum</taxon>
    </lineage>
</organism>
<feature type="chain" id="PRO_1000142099" description="Large ribosomal subunit protein uL4">
    <location>
        <begin position="1"/>
        <end position="208"/>
    </location>
</feature>
<feature type="region of interest" description="Disordered" evidence="2">
    <location>
        <begin position="46"/>
        <end position="97"/>
    </location>
</feature>
<feature type="compositionally biased region" description="Polar residues" evidence="2">
    <location>
        <begin position="69"/>
        <end position="80"/>
    </location>
</feature>
<comment type="function">
    <text evidence="1">One of the primary rRNA binding proteins, this protein initially binds near the 5'-end of the 23S rRNA. It is important during the early stages of 50S assembly. It makes multiple contacts with different domains of the 23S rRNA in the assembled 50S subunit and ribosome.</text>
</comment>
<comment type="function">
    <text evidence="1">Forms part of the polypeptide exit tunnel.</text>
</comment>
<comment type="subunit">
    <text evidence="1">Part of the 50S ribosomal subunit.</text>
</comment>
<comment type="similarity">
    <text evidence="1">Belongs to the universal ribosomal protein uL4 family.</text>
</comment>
<dbReference type="EMBL" id="CP001099">
    <property type="protein sequence ID" value="ACF10605.1"/>
    <property type="molecule type" value="Genomic_DNA"/>
</dbReference>
<dbReference type="RefSeq" id="WP_012501440.1">
    <property type="nucleotide sequence ID" value="NC_011027.1"/>
</dbReference>
<dbReference type="SMR" id="B3QR77"/>
<dbReference type="STRING" id="517417.Cpar_0178"/>
<dbReference type="KEGG" id="cpc:Cpar_0178"/>
<dbReference type="eggNOG" id="COG0088">
    <property type="taxonomic scope" value="Bacteria"/>
</dbReference>
<dbReference type="HOGENOM" id="CLU_041575_5_2_10"/>
<dbReference type="OrthoDB" id="9803201at2"/>
<dbReference type="Proteomes" id="UP000008811">
    <property type="component" value="Chromosome"/>
</dbReference>
<dbReference type="GO" id="GO:1990904">
    <property type="term" value="C:ribonucleoprotein complex"/>
    <property type="evidence" value="ECO:0007669"/>
    <property type="project" value="UniProtKB-KW"/>
</dbReference>
<dbReference type="GO" id="GO:0005840">
    <property type="term" value="C:ribosome"/>
    <property type="evidence" value="ECO:0007669"/>
    <property type="project" value="UniProtKB-KW"/>
</dbReference>
<dbReference type="GO" id="GO:0019843">
    <property type="term" value="F:rRNA binding"/>
    <property type="evidence" value="ECO:0007669"/>
    <property type="project" value="UniProtKB-UniRule"/>
</dbReference>
<dbReference type="GO" id="GO:0003735">
    <property type="term" value="F:structural constituent of ribosome"/>
    <property type="evidence" value="ECO:0007669"/>
    <property type="project" value="InterPro"/>
</dbReference>
<dbReference type="GO" id="GO:0006412">
    <property type="term" value="P:translation"/>
    <property type="evidence" value="ECO:0007669"/>
    <property type="project" value="UniProtKB-UniRule"/>
</dbReference>
<dbReference type="Gene3D" id="3.40.1370.10">
    <property type="match status" value="1"/>
</dbReference>
<dbReference type="HAMAP" id="MF_01328_B">
    <property type="entry name" value="Ribosomal_uL4_B"/>
    <property type="match status" value="1"/>
</dbReference>
<dbReference type="InterPro" id="IPR002136">
    <property type="entry name" value="Ribosomal_uL4"/>
</dbReference>
<dbReference type="InterPro" id="IPR013005">
    <property type="entry name" value="Ribosomal_uL4-like"/>
</dbReference>
<dbReference type="InterPro" id="IPR023574">
    <property type="entry name" value="Ribosomal_uL4_dom_sf"/>
</dbReference>
<dbReference type="NCBIfam" id="TIGR03953">
    <property type="entry name" value="rplD_bact"/>
    <property type="match status" value="1"/>
</dbReference>
<dbReference type="PANTHER" id="PTHR10746">
    <property type="entry name" value="50S RIBOSOMAL PROTEIN L4"/>
    <property type="match status" value="1"/>
</dbReference>
<dbReference type="PANTHER" id="PTHR10746:SF6">
    <property type="entry name" value="LARGE RIBOSOMAL SUBUNIT PROTEIN UL4M"/>
    <property type="match status" value="1"/>
</dbReference>
<dbReference type="Pfam" id="PF00573">
    <property type="entry name" value="Ribosomal_L4"/>
    <property type="match status" value="1"/>
</dbReference>
<dbReference type="SUPFAM" id="SSF52166">
    <property type="entry name" value="Ribosomal protein L4"/>
    <property type="match status" value="1"/>
</dbReference>
<reference key="1">
    <citation type="submission" date="2008-06" db="EMBL/GenBank/DDBJ databases">
        <title>Complete sequence of Chlorobaculum parvum NCIB 8327.</title>
        <authorList>
            <consortium name="US DOE Joint Genome Institute"/>
            <person name="Lucas S."/>
            <person name="Copeland A."/>
            <person name="Lapidus A."/>
            <person name="Glavina del Rio T."/>
            <person name="Dalin E."/>
            <person name="Tice H."/>
            <person name="Bruce D."/>
            <person name="Goodwin L."/>
            <person name="Pitluck S."/>
            <person name="Schmutz J."/>
            <person name="Larimer F."/>
            <person name="Land M."/>
            <person name="Hauser L."/>
            <person name="Kyrpides N."/>
            <person name="Mikhailova N."/>
            <person name="Zhao F."/>
            <person name="Li T."/>
            <person name="Liu Z."/>
            <person name="Overmann J."/>
            <person name="Bryant D.A."/>
            <person name="Richardson P."/>
        </authorList>
    </citation>
    <scope>NUCLEOTIDE SEQUENCE [LARGE SCALE GENOMIC DNA]</scope>
    <source>
        <strain>DSM 263 / NCIMB 8327</strain>
    </source>
</reference>
<sequence length="208" mass="22766">MELKVLNIQGAETGEVVTLNDDIFAVEVSEHAMYLDVKAILANRRQGTHKTKTRAEVRGGGKKPYRQKGTGNARQGSSRSPIMVGGGTIFGPQPRSYEQKVNRKVKQLARRSALSSKAAAGQIVVVEDFSLESIKTRPVADMLKNLGLAEKKTLLMMPHYDNVVSTSGRNIEKLNIQVADQASTYDILNSQAVLFQKAALQKIEETLG</sequence>